<feature type="chain" id="PRO_0000060833" description="Cytochrome b">
    <location>
        <begin position="1" status="less than"/>
        <end position="128" status="greater than"/>
    </location>
</feature>
<feature type="transmembrane region" description="Helical" evidence="3">
    <location>
        <begin position="25"/>
        <end position="45"/>
    </location>
</feature>
<feature type="transmembrane region" description="Helical" evidence="2">
    <location>
        <begin position="69"/>
        <end position="90"/>
    </location>
</feature>
<feature type="transmembrane region" description="Helical" evidence="2">
    <location>
        <begin position="105"/>
        <end position="125"/>
    </location>
</feature>
<feature type="binding site" description="axial binding residue" evidence="2">
    <location>
        <position position="75"/>
    </location>
    <ligand>
        <name>heme b</name>
        <dbReference type="ChEBI" id="CHEBI:60344"/>
        <label>b562</label>
    </ligand>
    <ligandPart>
        <name>Fe</name>
        <dbReference type="ChEBI" id="CHEBI:18248"/>
    </ligandPart>
</feature>
<feature type="binding site" description="axial binding residue" evidence="2">
    <location>
        <position position="89"/>
    </location>
    <ligand>
        <name>heme b</name>
        <dbReference type="ChEBI" id="CHEBI:60344"/>
        <label>b566</label>
    </ligand>
    <ligandPart>
        <name>Fe</name>
        <dbReference type="ChEBI" id="CHEBI:18248"/>
    </ligandPart>
</feature>
<feature type="binding site" evidence="2">
    <location>
        <position position="126"/>
    </location>
    <ligand>
        <name>a ubiquinone</name>
        <dbReference type="ChEBI" id="CHEBI:16389"/>
    </ligand>
</feature>
<feature type="non-terminal residue">
    <location>
        <position position="1"/>
    </location>
</feature>
<feature type="non-terminal residue">
    <location>
        <position position="128"/>
    </location>
</feature>
<organism>
    <name type="scientific">Crotalus viridis viridis</name>
    <name type="common">Prairie rattlesnake</name>
    <dbReference type="NCBI Taxonomy" id="8742"/>
    <lineage>
        <taxon>Eukaryota</taxon>
        <taxon>Metazoa</taxon>
        <taxon>Chordata</taxon>
        <taxon>Craniata</taxon>
        <taxon>Vertebrata</taxon>
        <taxon>Euteleostomi</taxon>
        <taxon>Lepidosauria</taxon>
        <taxon>Squamata</taxon>
        <taxon>Bifurcata</taxon>
        <taxon>Unidentata</taxon>
        <taxon>Episquamata</taxon>
        <taxon>Toxicofera</taxon>
        <taxon>Serpentes</taxon>
        <taxon>Colubroidea</taxon>
        <taxon>Viperidae</taxon>
        <taxon>Crotalinae</taxon>
        <taxon>Crotalus</taxon>
    </lineage>
</organism>
<name>CYB_CROVV</name>
<sequence>MTHQHLLTMFNLLPVGXNISTWWNFGSMLLSCLTIQIITGFFLAIHYTANINMAFSSIMHISRDVPYGWIMQNTHAIGXSLFFICIYIHIARGIYYGSYLNKEVWLSGTTLLITLMATASXXMCYHDT</sequence>
<geneLocation type="mitochondrion"/>
<evidence type="ECO:0000250" key="1"/>
<evidence type="ECO:0000250" key="2">
    <source>
        <dbReference type="UniProtKB" id="P00157"/>
    </source>
</evidence>
<evidence type="ECO:0000255" key="3">
    <source>
        <dbReference type="PROSITE-ProRule" id="PRU00968"/>
    </source>
</evidence>
<gene>
    <name type="primary">MT-CYB</name>
    <name type="synonym">COB</name>
    <name type="synonym">CYTB</name>
    <name type="synonym">MTCYB</name>
</gene>
<accession>Q95776</accession>
<reference key="1">
    <citation type="submission" date="1996-07" db="EMBL/GenBank/DDBJ databases">
        <authorList>
            <person name="Cullings K.W."/>
            <person name="Morafka D.J."/>
            <person name="Hernandez J."/>
            <person name="Roberts J.W."/>
        </authorList>
    </citation>
    <scope>NUCLEOTIDE SEQUENCE [GENOMIC DNA]</scope>
</reference>
<keyword id="KW-0249">Electron transport</keyword>
<keyword id="KW-0349">Heme</keyword>
<keyword id="KW-0408">Iron</keyword>
<keyword id="KW-0472">Membrane</keyword>
<keyword id="KW-0479">Metal-binding</keyword>
<keyword id="KW-0496">Mitochondrion</keyword>
<keyword id="KW-0999">Mitochondrion inner membrane</keyword>
<keyword id="KW-0679">Respiratory chain</keyword>
<keyword id="KW-0812">Transmembrane</keyword>
<keyword id="KW-1133">Transmembrane helix</keyword>
<keyword id="KW-0813">Transport</keyword>
<keyword id="KW-0830">Ubiquinone</keyword>
<protein>
    <recommendedName>
        <fullName>Cytochrome b</fullName>
    </recommendedName>
    <alternativeName>
        <fullName>Complex III subunit 3</fullName>
    </alternativeName>
    <alternativeName>
        <fullName>Complex III subunit III</fullName>
    </alternativeName>
    <alternativeName>
        <fullName>Cytochrome b-c1 complex subunit 3</fullName>
    </alternativeName>
    <alternativeName>
        <fullName>Ubiquinol-cytochrome-c reductase complex cytochrome b subunit</fullName>
    </alternativeName>
</protein>
<comment type="function">
    <text evidence="2">Component of the ubiquinol-cytochrome c reductase complex (complex III or cytochrome b-c1 complex) that is part of the mitochondrial respiratory chain. The b-c1 complex mediates electron transfer from ubiquinol to cytochrome c. Contributes to the generation of a proton gradient across the mitochondrial membrane that is then used for ATP synthesis.</text>
</comment>
<comment type="cofactor">
    <cofactor evidence="2">
        <name>heme b</name>
        <dbReference type="ChEBI" id="CHEBI:60344"/>
    </cofactor>
    <text evidence="2">Binds 2 heme b groups non-covalently.</text>
</comment>
<comment type="subunit">
    <text evidence="2">The cytochrome bc1 complex contains 3 respiratory subunits (MT-CYB, CYC1 and UQCRFS1), 2 core proteins (UQCRC1 and UQCRC2) and probably 6 low-molecular weight proteins.</text>
</comment>
<comment type="subcellular location">
    <subcellularLocation>
        <location evidence="2">Mitochondrion inner membrane</location>
        <topology evidence="2">Multi-pass membrane protein</topology>
    </subcellularLocation>
</comment>
<comment type="miscellaneous">
    <text evidence="1">Heme 1 (or BL or b562) is low-potential and absorbs at about 562 nm, and heme 2 (or BH or b566) is high-potential and absorbs at about 566 nm.</text>
</comment>
<comment type="similarity">
    <text evidence="3">Belongs to the cytochrome b family.</text>
</comment>
<comment type="caution">
    <text evidence="2">The full-length protein contains only eight transmembrane helices, not nine as predicted by bioinformatics tools.</text>
</comment>
<proteinExistence type="inferred from homology"/>
<dbReference type="EMBL" id="U65377">
    <property type="protein sequence ID" value="AAB06740.1"/>
    <property type="molecule type" value="Genomic_DNA"/>
</dbReference>
<dbReference type="GO" id="GO:0005743">
    <property type="term" value="C:mitochondrial inner membrane"/>
    <property type="evidence" value="ECO:0007669"/>
    <property type="project" value="UniProtKB-SubCell"/>
</dbReference>
<dbReference type="GO" id="GO:0046872">
    <property type="term" value="F:metal ion binding"/>
    <property type="evidence" value="ECO:0007669"/>
    <property type="project" value="UniProtKB-KW"/>
</dbReference>
<dbReference type="GO" id="GO:0008121">
    <property type="term" value="F:ubiquinol-cytochrome-c reductase activity"/>
    <property type="evidence" value="ECO:0007669"/>
    <property type="project" value="TreeGrafter"/>
</dbReference>
<dbReference type="GO" id="GO:0006122">
    <property type="term" value="P:mitochondrial electron transport, ubiquinol to cytochrome c"/>
    <property type="evidence" value="ECO:0007669"/>
    <property type="project" value="TreeGrafter"/>
</dbReference>
<dbReference type="Gene3D" id="1.20.810.10">
    <property type="entry name" value="Cytochrome Bc1 Complex, Chain C"/>
    <property type="match status" value="1"/>
</dbReference>
<dbReference type="InterPro" id="IPR005797">
    <property type="entry name" value="Cyt_b/b6_N"/>
</dbReference>
<dbReference type="InterPro" id="IPR027387">
    <property type="entry name" value="Cytb/b6-like_sf"/>
</dbReference>
<dbReference type="InterPro" id="IPR016174">
    <property type="entry name" value="Di-haem_cyt_TM"/>
</dbReference>
<dbReference type="PANTHER" id="PTHR19271">
    <property type="entry name" value="CYTOCHROME B"/>
    <property type="match status" value="1"/>
</dbReference>
<dbReference type="PANTHER" id="PTHR19271:SF16">
    <property type="entry name" value="CYTOCHROME B"/>
    <property type="match status" value="1"/>
</dbReference>
<dbReference type="Pfam" id="PF00033">
    <property type="entry name" value="Cytochrome_B"/>
    <property type="match status" value="1"/>
</dbReference>
<dbReference type="SUPFAM" id="SSF81342">
    <property type="entry name" value="Transmembrane di-heme cytochromes"/>
    <property type="match status" value="1"/>
</dbReference>
<dbReference type="PROSITE" id="PS51002">
    <property type="entry name" value="CYTB_NTER"/>
    <property type="match status" value="1"/>
</dbReference>